<gene>
    <name type="primary">MNN21</name>
    <name type="ordered locus">CAALFM_CR05300CA</name>
    <name type="ORF">CaO19.1011</name>
    <name type="ORF">CaO19.8625</name>
</gene>
<feature type="chain" id="PRO_0000428635" description="Alpha-1,2-mannosyltransferase MNN21">
    <location>
        <begin position="1"/>
        <end position="660"/>
    </location>
</feature>
<feature type="topological domain" description="Cytoplasmic" evidence="2">
    <location>
        <begin position="1"/>
        <end position="17"/>
    </location>
</feature>
<feature type="transmembrane region" description="Helical" evidence="2">
    <location>
        <begin position="18"/>
        <end position="38"/>
    </location>
</feature>
<feature type="topological domain" description="Extracellular" evidence="2">
    <location>
        <begin position="39"/>
        <end position="660"/>
    </location>
</feature>
<feature type="region of interest" description="Disordered" evidence="3">
    <location>
        <begin position="75"/>
        <end position="125"/>
    </location>
</feature>
<feature type="glycosylation site" description="N-linked (GlcNAc...) asparagine" evidence="2">
    <location>
        <position position="657"/>
    </location>
</feature>
<proteinExistence type="inferred from homology"/>
<evidence type="ECO:0000250" key="1"/>
<evidence type="ECO:0000255" key="2"/>
<evidence type="ECO:0000256" key="3">
    <source>
        <dbReference type="SAM" id="MobiDB-lite"/>
    </source>
</evidence>
<evidence type="ECO:0000269" key="4">
    <source>
    </source>
</evidence>
<evidence type="ECO:0000305" key="5"/>
<sequence length="660" mass="76921">MFQQLTYRLRLFRRRHKYIFINSIFLSVIIIFLIYSYWSNLPAEDNSAIINEKGTYHRSLWESITMALFPPKTKPFEEKKPQVNPNNNQEVGVESGASEISQHKQQQQQQQHAKEPTTKTSSKSLVSDEAYQLNLKLINEQQEKYNRLHPFEQKRLQQGYEFFDNIFKIFYQAKPSVSQLNTYPSKKRIYHARFDSLADDDTIFSEKYLSQFLQLSNEELAAMKKSHKYVVENLPEDAPDGLYKKNGIVYVAGGSFNWLTLLSIKSLRAVGCHLPIEVFIPKIEEYESDLCNRILPELDARCIYMKNQLMNPNKDNSDSFANKFEFKGYQYKALAILLSSFENVLLLDSDNIPAHSPEELFENDPFKSYGLVVWPDYWKRATSPYYYNIADIDVSEKYLGSKYNEVEGQYTDLSVEKGSVELDKIPLHQRLGSIPDPTSESGQLLISKKTHLKPLLLALYYNLYGPSHYYPLFSQGSDGEGDKETFLAATVTLGKRYYQVAKFLVSLGHFKVPGGDFEGCGMGQFDPQQDLEYIKLREQYAKIPEKDKEKQHKFKLQHQVLEKGPEILFVHANFPKLNPWKLKQEKKIFDAKGNRVRLYGPGMIKRIGYDFEWFQWEGMKYLLCIYDVNLQIFQDVKKSDLCDEILEHLRFLESTQNITD</sequence>
<organism>
    <name type="scientific">Candida albicans (strain SC5314 / ATCC MYA-2876)</name>
    <name type="common">Yeast</name>
    <dbReference type="NCBI Taxonomy" id="237561"/>
    <lineage>
        <taxon>Eukaryota</taxon>
        <taxon>Fungi</taxon>
        <taxon>Dikarya</taxon>
        <taxon>Ascomycota</taxon>
        <taxon>Saccharomycotina</taxon>
        <taxon>Pichiomycetes</taxon>
        <taxon>Debaryomycetaceae</taxon>
        <taxon>Candida/Lodderomyces clade</taxon>
        <taxon>Candida</taxon>
    </lineage>
</organism>
<accession>Q59KJ7</accession>
<accession>A0A1D8PSY3</accession>
<reference key="1">
    <citation type="journal article" date="2004" name="Proc. Natl. Acad. Sci. U.S.A.">
        <title>The diploid genome sequence of Candida albicans.</title>
        <authorList>
            <person name="Jones T."/>
            <person name="Federspiel N.A."/>
            <person name="Chibana H."/>
            <person name="Dungan J."/>
            <person name="Kalman S."/>
            <person name="Magee B.B."/>
            <person name="Newport G."/>
            <person name="Thorstenson Y.R."/>
            <person name="Agabian N."/>
            <person name="Magee P.T."/>
            <person name="Davis R.W."/>
            <person name="Scherer S."/>
        </authorList>
    </citation>
    <scope>NUCLEOTIDE SEQUENCE [LARGE SCALE GENOMIC DNA]</scope>
    <source>
        <strain>SC5314 / ATCC MYA-2876</strain>
    </source>
</reference>
<reference key="2">
    <citation type="journal article" date="2007" name="Genome Biol.">
        <title>Assembly of the Candida albicans genome into sixteen supercontigs aligned on the eight chromosomes.</title>
        <authorList>
            <person name="van het Hoog M."/>
            <person name="Rast T.J."/>
            <person name="Martchenko M."/>
            <person name="Grindle S."/>
            <person name="Dignard D."/>
            <person name="Hogues H."/>
            <person name="Cuomo C."/>
            <person name="Berriman M."/>
            <person name="Scherer S."/>
            <person name="Magee B.B."/>
            <person name="Whiteway M."/>
            <person name="Chibana H."/>
            <person name="Nantel A."/>
            <person name="Magee P.T."/>
        </authorList>
    </citation>
    <scope>GENOME REANNOTATION</scope>
    <source>
        <strain>SC5314 / ATCC MYA-2876</strain>
    </source>
</reference>
<reference key="3">
    <citation type="journal article" date="2013" name="Genome Biol.">
        <title>Assembly of a phased diploid Candida albicans genome facilitates allele-specific measurements and provides a simple model for repeat and indel structure.</title>
        <authorList>
            <person name="Muzzey D."/>
            <person name="Schwartz K."/>
            <person name="Weissman J.S."/>
            <person name="Sherlock G."/>
        </authorList>
    </citation>
    <scope>NUCLEOTIDE SEQUENCE [LARGE SCALE GENOMIC DNA]</scope>
    <scope>GENOME REANNOTATION</scope>
    <source>
        <strain>SC5314 / ATCC MYA-2876</strain>
    </source>
</reference>
<reference key="4">
    <citation type="journal article" date="2013" name="PLoS Pathog.">
        <title>The Mnn2 mannosyltransferase family modulates mannoprotein fibril length, immune recognition and virulence of Candida albicans.</title>
        <authorList>
            <person name="Hall R.A."/>
            <person name="Bates S."/>
            <person name="Lenardon M.D."/>
            <person name="Maccallum D.M."/>
            <person name="Wagener J."/>
            <person name="Lowman D.W."/>
            <person name="Kruppa M.D."/>
            <person name="Williams D.L."/>
            <person name="Odds F.C."/>
            <person name="Brown A.J."/>
            <person name="Gow N.A."/>
        </authorList>
    </citation>
    <scope>FUNCTION</scope>
</reference>
<keyword id="KW-0325">Glycoprotein</keyword>
<keyword id="KW-0333">Golgi apparatus</keyword>
<keyword id="KW-0472">Membrane</keyword>
<keyword id="KW-1185">Reference proteome</keyword>
<keyword id="KW-0735">Signal-anchor</keyword>
<keyword id="KW-0808">Transferase</keyword>
<keyword id="KW-0812">Transmembrane</keyword>
<keyword id="KW-1133">Transmembrane helix</keyword>
<dbReference type="EC" id="2.4.1.-"/>
<dbReference type="EMBL" id="CP017630">
    <property type="protein sequence ID" value="AOW31255.1"/>
    <property type="molecule type" value="Genomic_DNA"/>
</dbReference>
<dbReference type="RefSeq" id="XP_710276.1">
    <property type="nucleotide sequence ID" value="XM_705184.1"/>
</dbReference>
<dbReference type="FunCoup" id="Q59KJ7">
    <property type="interactions" value="82"/>
</dbReference>
<dbReference type="STRING" id="237561.Q59KJ7"/>
<dbReference type="GlyCosmos" id="Q59KJ7">
    <property type="glycosylation" value="1 site, No reported glycans"/>
</dbReference>
<dbReference type="EnsemblFungi" id="CR_05300C_A-T">
    <property type="protein sequence ID" value="CR_05300C_A-T-p1"/>
    <property type="gene ID" value="CR_05300C_A"/>
</dbReference>
<dbReference type="GeneID" id="3648124"/>
<dbReference type="KEGG" id="cal:CAALFM_CR05300CA"/>
<dbReference type="CGD" id="CAL0000174283">
    <property type="gene designation" value="MNN21"/>
</dbReference>
<dbReference type="VEuPathDB" id="FungiDB:CR_05300C_A"/>
<dbReference type="eggNOG" id="ENOG502QQ16">
    <property type="taxonomic scope" value="Eukaryota"/>
</dbReference>
<dbReference type="HOGENOM" id="CLU_013298_1_0_1"/>
<dbReference type="InParanoid" id="Q59KJ7"/>
<dbReference type="OMA" id="KGYQYKA"/>
<dbReference type="OrthoDB" id="430354at2759"/>
<dbReference type="UniPathway" id="UPA00378"/>
<dbReference type="PHI-base" id="PHI:2884"/>
<dbReference type="PRO" id="PR:Q59KJ7"/>
<dbReference type="Proteomes" id="UP000000559">
    <property type="component" value="Chromosome R"/>
</dbReference>
<dbReference type="GO" id="GO:0005794">
    <property type="term" value="C:Golgi apparatus"/>
    <property type="evidence" value="ECO:0000318"/>
    <property type="project" value="GO_Central"/>
</dbReference>
<dbReference type="GO" id="GO:0000139">
    <property type="term" value="C:Golgi membrane"/>
    <property type="evidence" value="ECO:0007669"/>
    <property type="project" value="UniProtKB-SubCell"/>
</dbReference>
<dbReference type="GO" id="GO:0000026">
    <property type="term" value="F:alpha-1,2-mannosyltransferase activity"/>
    <property type="evidence" value="ECO:0000318"/>
    <property type="project" value="GO_Central"/>
</dbReference>
<dbReference type="GO" id="GO:0046354">
    <property type="term" value="P:mannan biosynthetic process"/>
    <property type="evidence" value="ECO:0000315"/>
    <property type="project" value="CGD"/>
</dbReference>
<dbReference type="GO" id="GO:0035268">
    <property type="term" value="P:protein mannosylation"/>
    <property type="evidence" value="ECO:0000315"/>
    <property type="project" value="CGD"/>
</dbReference>
<dbReference type="Gene3D" id="3.90.550.10">
    <property type="entry name" value="Spore Coat Polysaccharide Biosynthesis Protein SpsA, Chain A"/>
    <property type="match status" value="1"/>
</dbReference>
<dbReference type="InterPro" id="IPR022751">
    <property type="entry name" value="Alpha_mannosyltransferase"/>
</dbReference>
<dbReference type="InterPro" id="IPR029044">
    <property type="entry name" value="Nucleotide-diphossugar_trans"/>
</dbReference>
<dbReference type="PANTHER" id="PTHR31646">
    <property type="entry name" value="ALPHA-1,2-MANNOSYLTRANSFERASE MNN2"/>
    <property type="match status" value="1"/>
</dbReference>
<dbReference type="PANTHER" id="PTHR31646:SF1">
    <property type="entry name" value="ALPHA-1,2-MANNOSYLTRANSFERASE MNN2"/>
    <property type="match status" value="1"/>
</dbReference>
<dbReference type="Pfam" id="PF11051">
    <property type="entry name" value="Mannosyl_trans3"/>
    <property type="match status" value="1"/>
</dbReference>
<dbReference type="SUPFAM" id="SSF53448">
    <property type="entry name" value="Nucleotide-diphospho-sugar transferases"/>
    <property type="match status" value="1"/>
</dbReference>
<name>MNN21_CANAL</name>
<comment type="function">
    <text evidence="4">Alpha-1,2-mannosyltransferase required for cell wall integrity. Responsible for addition of the first alpha-1,2-linked mannose to form the branches on the mannan backbone of oligosaccharides. Addition of alpha-1,2-mannose is required for stabilization of the alpha-1,6-mannose backbone and hence regulates mannan fibril length; and is important for both immune recognition and virulence.</text>
</comment>
<comment type="pathway">
    <text>Protein modification; protein glycosylation.</text>
</comment>
<comment type="subcellular location">
    <subcellularLocation>
        <location evidence="1">Golgi apparatus membrane</location>
        <topology evidence="1">Single-pass type II membrane protein</topology>
    </subcellularLocation>
</comment>
<comment type="similarity">
    <text evidence="5">Belongs to the MNN1/MNT family.</text>
</comment>
<protein>
    <recommendedName>
        <fullName>Alpha-1,2-mannosyltransferase MNN21</fullName>
        <ecNumber>2.4.1.-</ecNumber>
    </recommendedName>
</protein>